<sequence>MSQKELWYETLHANFGQYFSVENVLYREKTEHQDLVIFENPELGRVMALDGVVQTTERDEFIYHEMMTHVPLLAHGQAKKVLIIGGGDGAMLREVSRHKNIEQITMVEIDAGVVEFCRQYLPNHSAGAYDDPRFKLVIDDGVNFVNQTTEKFDVIISDCTDPIGPGESLFTSVFYEGCARSLNEGGIFVAQNGVCFLQQDEAVNSHNKLSHYFSDVSFYQAAIPTYYGGIMTFAWATQNPALRQLDLATLQNRFAQAGLACRYYNPAIHVGSFALPQYLLDALTTIPKVIGVDSSE</sequence>
<feature type="chain" id="PRO_1000012037" description="Polyamine aminopropyltransferase">
    <location>
        <begin position="1"/>
        <end position="296"/>
    </location>
</feature>
<feature type="domain" description="PABS" evidence="1">
    <location>
        <begin position="5"/>
        <end position="238"/>
    </location>
</feature>
<feature type="active site" description="Proton acceptor" evidence="1">
    <location>
        <position position="158"/>
    </location>
</feature>
<feature type="binding site" evidence="1">
    <location>
        <position position="33"/>
    </location>
    <ligand>
        <name>S-methyl-5'-thioadenosine</name>
        <dbReference type="ChEBI" id="CHEBI:17509"/>
    </ligand>
</feature>
<feature type="binding site" evidence="1">
    <location>
        <position position="64"/>
    </location>
    <ligand>
        <name>spermidine</name>
        <dbReference type="ChEBI" id="CHEBI:57834"/>
    </ligand>
</feature>
<feature type="binding site" evidence="1">
    <location>
        <position position="88"/>
    </location>
    <ligand>
        <name>spermidine</name>
        <dbReference type="ChEBI" id="CHEBI:57834"/>
    </ligand>
</feature>
<feature type="binding site" evidence="1">
    <location>
        <position position="108"/>
    </location>
    <ligand>
        <name>S-methyl-5'-thioadenosine</name>
        <dbReference type="ChEBI" id="CHEBI:17509"/>
    </ligand>
</feature>
<feature type="binding site" evidence="1">
    <location>
        <begin position="140"/>
        <end position="141"/>
    </location>
    <ligand>
        <name>S-methyl-5'-thioadenosine</name>
        <dbReference type="ChEBI" id="CHEBI:17509"/>
    </ligand>
</feature>
<feature type="binding site" evidence="1">
    <location>
        <begin position="158"/>
        <end position="161"/>
    </location>
    <ligand>
        <name>spermidine</name>
        <dbReference type="ChEBI" id="CHEBI:57834"/>
    </ligand>
</feature>
<feature type="binding site" evidence="1">
    <location>
        <position position="165"/>
    </location>
    <ligand>
        <name>S-methyl-5'-thioadenosine</name>
        <dbReference type="ChEBI" id="CHEBI:17509"/>
    </ligand>
</feature>
<organism>
    <name type="scientific">Yersinia pseudotuberculosis serotype I (strain IP32953)</name>
    <dbReference type="NCBI Taxonomy" id="273123"/>
    <lineage>
        <taxon>Bacteria</taxon>
        <taxon>Pseudomonadati</taxon>
        <taxon>Pseudomonadota</taxon>
        <taxon>Gammaproteobacteria</taxon>
        <taxon>Enterobacterales</taxon>
        <taxon>Yersiniaceae</taxon>
        <taxon>Yersinia</taxon>
    </lineage>
</organism>
<evidence type="ECO:0000255" key="1">
    <source>
        <dbReference type="HAMAP-Rule" id="MF_00198"/>
    </source>
</evidence>
<keyword id="KW-0963">Cytoplasm</keyword>
<keyword id="KW-0620">Polyamine biosynthesis</keyword>
<keyword id="KW-0745">Spermidine biosynthesis</keyword>
<keyword id="KW-0808">Transferase</keyword>
<name>SPEE_YERPS</name>
<accession>Q66EH3</accession>
<comment type="function">
    <text evidence="1">Catalyzes the irreversible transfer of a propylamine group from the amino donor S-adenosylmethioninamine (decarboxy-AdoMet) to putrescine (1,4-diaminobutane) to yield spermidine.</text>
</comment>
<comment type="catalytic activity">
    <reaction evidence="1">
        <text>S-adenosyl 3-(methylsulfanyl)propylamine + putrescine = S-methyl-5'-thioadenosine + spermidine + H(+)</text>
        <dbReference type="Rhea" id="RHEA:12721"/>
        <dbReference type="ChEBI" id="CHEBI:15378"/>
        <dbReference type="ChEBI" id="CHEBI:17509"/>
        <dbReference type="ChEBI" id="CHEBI:57443"/>
        <dbReference type="ChEBI" id="CHEBI:57834"/>
        <dbReference type="ChEBI" id="CHEBI:326268"/>
        <dbReference type="EC" id="2.5.1.16"/>
    </reaction>
</comment>
<comment type="pathway">
    <text evidence="1">Amine and polyamine biosynthesis; spermidine biosynthesis; spermidine from putrescine: step 1/1.</text>
</comment>
<comment type="subunit">
    <text evidence="1">Homodimer or homotetramer.</text>
</comment>
<comment type="subcellular location">
    <subcellularLocation>
        <location evidence="1">Cytoplasm</location>
    </subcellularLocation>
</comment>
<comment type="similarity">
    <text evidence="1">Belongs to the spermidine/spermine synthase family.</text>
</comment>
<reference key="1">
    <citation type="journal article" date="2004" name="Proc. Natl. Acad. Sci. U.S.A.">
        <title>Insights into the evolution of Yersinia pestis through whole-genome comparison with Yersinia pseudotuberculosis.</title>
        <authorList>
            <person name="Chain P.S.G."/>
            <person name="Carniel E."/>
            <person name="Larimer F.W."/>
            <person name="Lamerdin J."/>
            <person name="Stoutland P.O."/>
            <person name="Regala W.M."/>
            <person name="Georgescu A.M."/>
            <person name="Vergez L.M."/>
            <person name="Land M.L."/>
            <person name="Motin V.L."/>
            <person name="Brubaker R.R."/>
            <person name="Fowler J."/>
            <person name="Hinnebusch J."/>
            <person name="Marceau M."/>
            <person name="Medigue C."/>
            <person name="Simonet M."/>
            <person name="Chenal-Francisque V."/>
            <person name="Souza B."/>
            <person name="Dacheux D."/>
            <person name="Elliott J.M."/>
            <person name="Derbise A."/>
            <person name="Hauser L.J."/>
            <person name="Garcia E."/>
        </authorList>
    </citation>
    <scope>NUCLEOTIDE SEQUENCE [LARGE SCALE GENOMIC DNA]</scope>
    <source>
        <strain>IP32953</strain>
    </source>
</reference>
<protein>
    <recommendedName>
        <fullName evidence="1">Polyamine aminopropyltransferase</fullName>
    </recommendedName>
    <alternativeName>
        <fullName evidence="1">Putrescine aminopropyltransferase</fullName>
        <shortName evidence="1">PAPT</shortName>
    </alternativeName>
    <alternativeName>
        <fullName evidence="1">Spermidine synthase</fullName>
        <shortName evidence="1">SPDS</shortName>
        <shortName evidence="1">SPDSY</shortName>
        <ecNumber evidence="1">2.5.1.16</ecNumber>
    </alternativeName>
</protein>
<dbReference type="EC" id="2.5.1.16" evidence="1"/>
<dbReference type="EMBL" id="BX936398">
    <property type="protein sequence ID" value="CAH19960.1"/>
    <property type="molecule type" value="Genomic_DNA"/>
</dbReference>
<dbReference type="RefSeq" id="WP_011191746.1">
    <property type="nucleotide sequence ID" value="NC_006155.1"/>
</dbReference>
<dbReference type="SMR" id="Q66EH3"/>
<dbReference type="GeneID" id="49787275"/>
<dbReference type="KEGG" id="ypo:BZ17_1835"/>
<dbReference type="KEGG" id="yps:YPTB0720"/>
<dbReference type="PATRIC" id="fig|273123.14.peg.1946"/>
<dbReference type="UniPathway" id="UPA00248">
    <property type="reaction ID" value="UER00314"/>
</dbReference>
<dbReference type="Proteomes" id="UP000001011">
    <property type="component" value="Chromosome"/>
</dbReference>
<dbReference type="GO" id="GO:0005829">
    <property type="term" value="C:cytosol"/>
    <property type="evidence" value="ECO:0007669"/>
    <property type="project" value="TreeGrafter"/>
</dbReference>
<dbReference type="GO" id="GO:0004766">
    <property type="term" value="F:spermidine synthase activity"/>
    <property type="evidence" value="ECO:0007669"/>
    <property type="project" value="UniProtKB-UniRule"/>
</dbReference>
<dbReference type="GO" id="GO:0008295">
    <property type="term" value="P:spermidine biosynthetic process"/>
    <property type="evidence" value="ECO:0007669"/>
    <property type="project" value="UniProtKB-UniRule"/>
</dbReference>
<dbReference type="CDD" id="cd02440">
    <property type="entry name" value="AdoMet_MTases"/>
    <property type="match status" value="1"/>
</dbReference>
<dbReference type="FunFam" id="2.30.140.10:FF:000002">
    <property type="entry name" value="Polyamine aminopropyltransferase"/>
    <property type="match status" value="1"/>
</dbReference>
<dbReference type="FunFam" id="3.40.50.150:FF:000026">
    <property type="entry name" value="Polyamine aminopropyltransferase"/>
    <property type="match status" value="1"/>
</dbReference>
<dbReference type="Gene3D" id="2.30.140.10">
    <property type="entry name" value="Spermidine synthase, tetramerisation domain"/>
    <property type="match status" value="1"/>
</dbReference>
<dbReference type="Gene3D" id="3.40.50.150">
    <property type="entry name" value="Vaccinia Virus protein VP39"/>
    <property type="match status" value="1"/>
</dbReference>
<dbReference type="HAMAP" id="MF_00198">
    <property type="entry name" value="Spermidine_synth"/>
    <property type="match status" value="1"/>
</dbReference>
<dbReference type="InterPro" id="IPR030374">
    <property type="entry name" value="PABS"/>
</dbReference>
<dbReference type="InterPro" id="IPR030373">
    <property type="entry name" value="PABS_CS"/>
</dbReference>
<dbReference type="InterPro" id="IPR029063">
    <property type="entry name" value="SAM-dependent_MTases_sf"/>
</dbReference>
<dbReference type="InterPro" id="IPR001045">
    <property type="entry name" value="Spermi_synthase"/>
</dbReference>
<dbReference type="InterPro" id="IPR035246">
    <property type="entry name" value="Spermidine_synt_N"/>
</dbReference>
<dbReference type="InterPro" id="IPR037163">
    <property type="entry name" value="Spermidine_synt_N_sf"/>
</dbReference>
<dbReference type="NCBIfam" id="NF037959">
    <property type="entry name" value="MFS_SpdSyn"/>
    <property type="match status" value="1"/>
</dbReference>
<dbReference type="NCBIfam" id="NF002010">
    <property type="entry name" value="PRK00811.1"/>
    <property type="match status" value="1"/>
</dbReference>
<dbReference type="NCBIfam" id="TIGR00417">
    <property type="entry name" value="speE"/>
    <property type="match status" value="1"/>
</dbReference>
<dbReference type="PANTHER" id="PTHR11558:SF11">
    <property type="entry name" value="SPERMIDINE SYNTHASE"/>
    <property type="match status" value="1"/>
</dbReference>
<dbReference type="PANTHER" id="PTHR11558">
    <property type="entry name" value="SPERMIDINE/SPERMINE SYNTHASE"/>
    <property type="match status" value="1"/>
</dbReference>
<dbReference type="Pfam" id="PF17284">
    <property type="entry name" value="Spermine_synt_N"/>
    <property type="match status" value="1"/>
</dbReference>
<dbReference type="Pfam" id="PF01564">
    <property type="entry name" value="Spermine_synth"/>
    <property type="match status" value="1"/>
</dbReference>
<dbReference type="SUPFAM" id="SSF53335">
    <property type="entry name" value="S-adenosyl-L-methionine-dependent methyltransferases"/>
    <property type="match status" value="1"/>
</dbReference>
<dbReference type="PROSITE" id="PS01330">
    <property type="entry name" value="PABS_1"/>
    <property type="match status" value="1"/>
</dbReference>
<dbReference type="PROSITE" id="PS51006">
    <property type="entry name" value="PABS_2"/>
    <property type="match status" value="1"/>
</dbReference>
<proteinExistence type="inferred from homology"/>
<gene>
    <name evidence="1" type="primary">speE</name>
    <name type="ordered locus">YPTB0720</name>
</gene>